<evidence type="ECO:0000255" key="1">
    <source>
        <dbReference type="HAMAP-Rule" id="MF_01338"/>
    </source>
</evidence>
<gene>
    <name evidence="1" type="primary">cbbL1</name>
    <name type="ordered locus">BRADO1659</name>
</gene>
<sequence length="486" mass="53965">MNDQSITVRGKDRYKSGVMEYKKMGYWEPSYQPNDTDVIALFRVTPQDGVDPVEACAAVAGESSTATWTVVWTDRLTAAEKYRAKCYRVEPVPGSPGSYFAYIAYDLDLFEPGSIANLTASIIGNVFGFKPLKALRLEDMRLPVAYVKTFQGPATGIVVERERLDKFGRPLLGATVKPKLGLSGRNYGRVVYEALKGGLDFTKDDENINSQPFMHWRERFLYCMEAVNKAQAATGEIKGTYLNVTAATMEDMYERAEFAKELGSNIIMIDLVIGYTAIQSMAKWSRKNDMILHLHRAGHSTYTRQRAHGVSFRVIAKWMRLAGVDHIHAGTVVGKLEGDPNTTRGYYDICREDFNPMRLEHGVFFDQHWASLNKLMPVASGGIHAGQMHQLLDLLGEDVVLQFGGGTIGHPRGIAAGATANRVALEAMILARNEGRDYVHEGPEILAKAAMTCTPLREALEIWKDVTFNYESTDSPDFVPTVTPAA</sequence>
<comment type="function">
    <text evidence="1">RuBisCO catalyzes two reactions: the carboxylation of D-ribulose 1,5-bisphosphate, the primary event in carbon dioxide fixation, as well as the oxidative fragmentation of the pentose substrate. Both reactions occur simultaneously and in competition at the same active site.</text>
</comment>
<comment type="catalytic activity">
    <reaction evidence="1">
        <text>2 (2R)-3-phosphoglycerate + 2 H(+) = D-ribulose 1,5-bisphosphate + CO2 + H2O</text>
        <dbReference type="Rhea" id="RHEA:23124"/>
        <dbReference type="ChEBI" id="CHEBI:15377"/>
        <dbReference type="ChEBI" id="CHEBI:15378"/>
        <dbReference type="ChEBI" id="CHEBI:16526"/>
        <dbReference type="ChEBI" id="CHEBI:57870"/>
        <dbReference type="ChEBI" id="CHEBI:58272"/>
        <dbReference type="EC" id="4.1.1.39"/>
    </reaction>
</comment>
<comment type="catalytic activity">
    <reaction evidence="1">
        <text>D-ribulose 1,5-bisphosphate + O2 = 2-phosphoglycolate + (2R)-3-phosphoglycerate + 2 H(+)</text>
        <dbReference type="Rhea" id="RHEA:36631"/>
        <dbReference type="ChEBI" id="CHEBI:15378"/>
        <dbReference type="ChEBI" id="CHEBI:15379"/>
        <dbReference type="ChEBI" id="CHEBI:57870"/>
        <dbReference type="ChEBI" id="CHEBI:58033"/>
        <dbReference type="ChEBI" id="CHEBI:58272"/>
    </reaction>
</comment>
<comment type="cofactor">
    <cofactor evidence="1">
        <name>Mg(2+)</name>
        <dbReference type="ChEBI" id="CHEBI:18420"/>
    </cofactor>
    <text evidence="1">Binds 1 Mg(2+) ion per subunit.</text>
</comment>
<comment type="subunit">
    <text evidence="1">Heterohexadecamer of 8 large chains and 8 small chains.</text>
</comment>
<comment type="miscellaneous">
    <text evidence="1">The basic functional RuBisCO is composed of a large chain homodimer in a 'head-to-tail' conformation. In form I RuBisCO this homodimer is arranged in a barrel-like tetramer with the small subunits forming a tetrameric 'cap' on each end of the 'barrel'.</text>
</comment>
<comment type="similarity">
    <text evidence="1">Belongs to the RuBisCO large chain family. Type I subfamily.</text>
</comment>
<keyword id="KW-0113">Calvin cycle</keyword>
<keyword id="KW-0120">Carbon dioxide fixation</keyword>
<keyword id="KW-0456">Lyase</keyword>
<keyword id="KW-0460">Magnesium</keyword>
<keyword id="KW-0479">Metal-binding</keyword>
<keyword id="KW-0503">Monooxygenase</keyword>
<keyword id="KW-0560">Oxidoreductase</keyword>
<keyword id="KW-0602">Photosynthesis</keyword>
<keyword id="KW-1185">Reference proteome</keyword>
<reference key="1">
    <citation type="journal article" date="2007" name="Science">
        <title>Legumes symbioses: absence of nod genes in photosynthetic bradyrhizobia.</title>
        <authorList>
            <person name="Giraud E."/>
            <person name="Moulin L."/>
            <person name="Vallenet D."/>
            <person name="Barbe V."/>
            <person name="Cytryn E."/>
            <person name="Avarre J.-C."/>
            <person name="Jaubert M."/>
            <person name="Simon D."/>
            <person name="Cartieaux F."/>
            <person name="Prin Y."/>
            <person name="Bena G."/>
            <person name="Hannibal L."/>
            <person name="Fardoux J."/>
            <person name="Kojadinovic M."/>
            <person name="Vuillet L."/>
            <person name="Lajus A."/>
            <person name="Cruveiller S."/>
            <person name="Rouy Z."/>
            <person name="Mangenot S."/>
            <person name="Segurens B."/>
            <person name="Dossat C."/>
            <person name="Franck W.L."/>
            <person name="Chang W.-S."/>
            <person name="Saunders E."/>
            <person name="Bruce D."/>
            <person name="Richardson P."/>
            <person name="Normand P."/>
            <person name="Dreyfus B."/>
            <person name="Pignol D."/>
            <person name="Stacey G."/>
            <person name="Emerich D."/>
            <person name="Vermeglio A."/>
            <person name="Medigue C."/>
            <person name="Sadowsky M."/>
        </authorList>
    </citation>
    <scope>NUCLEOTIDE SEQUENCE [LARGE SCALE GENOMIC DNA]</scope>
    <source>
        <strain>ORS 278</strain>
    </source>
</reference>
<name>RBL1A_BRASO</name>
<feature type="chain" id="PRO_0000299961" description="Ribulose bisphosphate carboxylase large chain 1">
    <location>
        <begin position="1"/>
        <end position="486"/>
    </location>
</feature>
<feature type="active site" description="Proton acceptor" evidence="1">
    <location>
        <position position="177"/>
    </location>
</feature>
<feature type="active site" description="Proton acceptor" evidence="1">
    <location>
        <position position="295"/>
    </location>
</feature>
<feature type="binding site" description="in homodimeric partner" evidence="1">
    <location>
        <position position="125"/>
    </location>
    <ligand>
        <name>substrate</name>
    </ligand>
</feature>
<feature type="binding site" evidence="1">
    <location>
        <position position="175"/>
    </location>
    <ligand>
        <name>substrate</name>
    </ligand>
</feature>
<feature type="binding site" evidence="1">
    <location>
        <position position="179"/>
    </location>
    <ligand>
        <name>substrate</name>
    </ligand>
</feature>
<feature type="binding site" description="via carbamate group" evidence="1">
    <location>
        <position position="203"/>
    </location>
    <ligand>
        <name>Mg(2+)</name>
        <dbReference type="ChEBI" id="CHEBI:18420"/>
    </ligand>
</feature>
<feature type="binding site" evidence="1">
    <location>
        <position position="205"/>
    </location>
    <ligand>
        <name>Mg(2+)</name>
        <dbReference type="ChEBI" id="CHEBI:18420"/>
    </ligand>
</feature>
<feature type="binding site" evidence="1">
    <location>
        <position position="206"/>
    </location>
    <ligand>
        <name>Mg(2+)</name>
        <dbReference type="ChEBI" id="CHEBI:18420"/>
    </ligand>
</feature>
<feature type="binding site" evidence="1">
    <location>
        <position position="296"/>
    </location>
    <ligand>
        <name>substrate</name>
    </ligand>
</feature>
<feature type="binding site" evidence="1">
    <location>
        <position position="328"/>
    </location>
    <ligand>
        <name>substrate</name>
    </ligand>
</feature>
<feature type="binding site" evidence="1">
    <location>
        <position position="380"/>
    </location>
    <ligand>
        <name>substrate</name>
    </ligand>
</feature>
<feature type="site" description="Transition state stabilizer" evidence="1">
    <location>
        <position position="335"/>
    </location>
</feature>
<feature type="modified residue" description="N6-carboxylysine" evidence="1">
    <location>
        <position position="203"/>
    </location>
</feature>
<protein>
    <recommendedName>
        <fullName evidence="1">Ribulose bisphosphate carboxylase large chain 1</fullName>
        <shortName evidence="1">RuBisCO large subunit 1</shortName>
        <ecNumber evidence="1">4.1.1.39</ecNumber>
    </recommendedName>
</protein>
<accession>A4YNR1</accession>
<organism>
    <name type="scientific">Bradyrhizobium sp. (strain ORS 278)</name>
    <dbReference type="NCBI Taxonomy" id="114615"/>
    <lineage>
        <taxon>Bacteria</taxon>
        <taxon>Pseudomonadati</taxon>
        <taxon>Pseudomonadota</taxon>
        <taxon>Alphaproteobacteria</taxon>
        <taxon>Hyphomicrobiales</taxon>
        <taxon>Nitrobacteraceae</taxon>
        <taxon>Bradyrhizobium</taxon>
    </lineage>
</organism>
<proteinExistence type="inferred from homology"/>
<dbReference type="EC" id="4.1.1.39" evidence="1"/>
<dbReference type="EMBL" id="CU234118">
    <property type="protein sequence ID" value="CAL75537.1"/>
    <property type="molecule type" value="Genomic_DNA"/>
</dbReference>
<dbReference type="RefSeq" id="WP_011924765.1">
    <property type="nucleotide sequence ID" value="NC_009445.1"/>
</dbReference>
<dbReference type="SMR" id="A4YNR1"/>
<dbReference type="STRING" id="114615.BRADO1659"/>
<dbReference type="KEGG" id="bra:BRADO1659"/>
<dbReference type="eggNOG" id="COG1850">
    <property type="taxonomic scope" value="Bacteria"/>
</dbReference>
<dbReference type="HOGENOM" id="CLU_031450_2_0_5"/>
<dbReference type="OrthoDB" id="9764279at2"/>
<dbReference type="Proteomes" id="UP000001994">
    <property type="component" value="Chromosome"/>
</dbReference>
<dbReference type="GO" id="GO:0000287">
    <property type="term" value="F:magnesium ion binding"/>
    <property type="evidence" value="ECO:0007669"/>
    <property type="project" value="UniProtKB-UniRule"/>
</dbReference>
<dbReference type="GO" id="GO:0004497">
    <property type="term" value="F:monooxygenase activity"/>
    <property type="evidence" value="ECO:0007669"/>
    <property type="project" value="UniProtKB-KW"/>
</dbReference>
<dbReference type="GO" id="GO:0016984">
    <property type="term" value="F:ribulose-bisphosphate carboxylase activity"/>
    <property type="evidence" value="ECO:0007669"/>
    <property type="project" value="UniProtKB-UniRule"/>
</dbReference>
<dbReference type="GO" id="GO:0019253">
    <property type="term" value="P:reductive pentose-phosphate cycle"/>
    <property type="evidence" value="ECO:0007669"/>
    <property type="project" value="UniProtKB-UniRule"/>
</dbReference>
<dbReference type="CDD" id="cd08212">
    <property type="entry name" value="RuBisCO_large_I"/>
    <property type="match status" value="1"/>
</dbReference>
<dbReference type="Gene3D" id="3.20.20.110">
    <property type="entry name" value="Ribulose bisphosphate carboxylase, large subunit, C-terminal domain"/>
    <property type="match status" value="1"/>
</dbReference>
<dbReference type="Gene3D" id="3.30.70.150">
    <property type="entry name" value="RuBisCO large subunit, N-terminal domain"/>
    <property type="match status" value="1"/>
</dbReference>
<dbReference type="HAMAP" id="MF_01338">
    <property type="entry name" value="RuBisCO_L_type1"/>
    <property type="match status" value="1"/>
</dbReference>
<dbReference type="InterPro" id="IPR033966">
    <property type="entry name" value="RuBisCO"/>
</dbReference>
<dbReference type="InterPro" id="IPR020878">
    <property type="entry name" value="RuBisCo_large_chain_AS"/>
</dbReference>
<dbReference type="InterPro" id="IPR000685">
    <property type="entry name" value="RuBisCO_lsu_C"/>
</dbReference>
<dbReference type="InterPro" id="IPR036376">
    <property type="entry name" value="RuBisCO_lsu_C_sf"/>
</dbReference>
<dbReference type="InterPro" id="IPR017443">
    <property type="entry name" value="RuBisCO_lsu_fd_N"/>
</dbReference>
<dbReference type="InterPro" id="IPR036422">
    <property type="entry name" value="RuBisCO_lsu_N_sf"/>
</dbReference>
<dbReference type="InterPro" id="IPR020888">
    <property type="entry name" value="RuBisCO_lsuI"/>
</dbReference>
<dbReference type="NCBIfam" id="NF003252">
    <property type="entry name" value="PRK04208.1"/>
    <property type="match status" value="1"/>
</dbReference>
<dbReference type="PANTHER" id="PTHR42704">
    <property type="entry name" value="RIBULOSE BISPHOSPHATE CARBOXYLASE"/>
    <property type="match status" value="1"/>
</dbReference>
<dbReference type="PANTHER" id="PTHR42704:SF17">
    <property type="entry name" value="RIBULOSE BISPHOSPHATE CARBOXYLASE LARGE CHAIN"/>
    <property type="match status" value="1"/>
</dbReference>
<dbReference type="Pfam" id="PF00016">
    <property type="entry name" value="RuBisCO_large"/>
    <property type="match status" value="1"/>
</dbReference>
<dbReference type="Pfam" id="PF02788">
    <property type="entry name" value="RuBisCO_large_N"/>
    <property type="match status" value="1"/>
</dbReference>
<dbReference type="SFLD" id="SFLDG01052">
    <property type="entry name" value="RuBisCO"/>
    <property type="match status" value="1"/>
</dbReference>
<dbReference type="SFLD" id="SFLDS00014">
    <property type="entry name" value="RuBisCO"/>
    <property type="match status" value="1"/>
</dbReference>
<dbReference type="SFLD" id="SFLDG00301">
    <property type="entry name" value="RuBisCO-like_proteins"/>
    <property type="match status" value="1"/>
</dbReference>
<dbReference type="SUPFAM" id="SSF51649">
    <property type="entry name" value="RuBisCo, C-terminal domain"/>
    <property type="match status" value="1"/>
</dbReference>
<dbReference type="SUPFAM" id="SSF54966">
    <property type="entry name" value="RuBisCO, large subunit, small (N-terminal) domain"/>
    <property type="match status" value="1"/>
</dbReference>
<dbReference type="PROSITE" id="PS00157">
    <property type="entry name" value="RUBISCO_LARGE"/>
    <property type="match status" value="1"/>
</dbReference>